<organism>
    <name type="scientific">Rickettsia conorii (strain ATCC VR-613 / Malish 7)</name>
    <dbReference type="NCBI Taxonomy" id="272944"/>
    <lineage>
        <taxon>Bacteria</taxon>
        <taxon>Pseudomonadati</taxon>
        <taxon>Pseudomonadota</taxon>
        <taxon>Alphaproteobacteria</taxon>
        <taxon>Rickettsiales</taxon>
        <taxon>Rickettsiaceae</taxon>
        <taxon>Rickettsieae</taxon>
        <taxon>Rickettsia</taxon>
        <taxon>spotted fever group</taxon>
    </lineage>
</organism>
<comment type="function">
    <text evidence="1">Has a glutathione-disulfide oxidoreductase activity in the presence of NADPH and glutathione reductase. Reduces low molecular weight disulfides and proteins (By similarity).</text>
</comment>
<comment type="subunit">
    <text evidence="1">Monomer.</text>
</comment>
<comment type="subcellular location">
    <subcellularLocation>
        <location evidence="1">Cytoplasm</location>
    </subcellularLocation>
</comment>
<comment type="similarity">
    <text evidence="3">Belongs to the glutaredoxin family.</text>
</comment>
<name>GLRX1_RICCN</name>
<accession>Q92J02</accession>
<feature type="chain" id="PRO_0000288735" description="Glutaredoxin 1">
    <location>
        <begin position="1"/>
        <end position="102"/>
    </location>
</feature>
<feature type="domain" description="Glutaredoxin" evidence="2">
    <location>
        <begin position="1"/>
        <end position="96"/>
    </location>
</feature>
<feature type="disulfide bond" description="Redox-active" evidence="1">
    <location>
        <begin position="17"/>
        <end position="20"/>
    </location>
</feature>
<protein>
    <recommendedName>
        <fullName>Glutaredoxin 1</fullName>
    </recommendedName>
</protein>
<keyword id="KW-0963">Cytoplasm</keyword>
<keyword id="KW-1015">Disulfide bond</keyword>
<keyword id="KW-0249">Electron transport</keyword>
<keyword id="KW-0676">Redox-active center</keyword>
<keyword id="KW-0813">Transport</keyword>
<dbReference type="EMBL" id="AE006914">
    <property type="protein sequence ID" value="AAL02805.1"/>
    <property type="molecule type" value="Genomic_DNA"/>
</dbReference>
<dbReference type="PIR" id="C97733">
    <property type="entry name" value="C97733"/>
</dbReference>
<dbReference type="SMR" id="Q92J02"/>
<dbReference type="GeneID" id="927911"/>
<dbReference type="KEGG" id="rco:RC0267"/>
<dbReference type="HOGENOM" id="CLU_026126_7_3_5"/>
<dbReference type="Proteomes" id="UP000000816">
    <property type="component" value="Chromosome"/>
</dbReference>
<dbReference type="GO" id="GO:0005737">
    <property type="term" value="C:cytoplasm"/>
    <property type="evidence" value="ECO:0007669"/>
    <property type="project" value="UniProtKB-SubCell"/>
</dbReference>
<dbReference type="GO" id="GO:0015038">
    <property type="term" value="F:glutathione disulfide oxidoreductase activity"/>
    <property type="evidence" value="ECO:0007669"/>
    <property type="project" value="TreeGrafter"/>
</dbReference>
<dbReference type="GO" id="GO:0045454">
    <property type="term" value="P:cell redox homeostasis"/>
    <property type="evidence" value="ECO:0007669"/>
    <property type="project" value="InterPro"/>
</dbReference>
<dbReference type="GO" id="GO:0034599">
    <property type="term" value="P:cellular response to oxidative stress"/>
    <property type="evidence" value="ECO:0007669"/>
    <property type="project" value="TreeGrafter"/>
</dbReference>
<dbReference type="CDD" id="cd03418">
    <property type="entry name" value="GRX_GRXb_1_3_like"/>
    <property type="match status" value="1"/>
</dbReference>
<dbReference type="Gene3D" id="3.40.30.10">
    <property type="entry name" value="Glutaredoxin"/>
    <property type="match status" value="1"/>
</dbReference>
<dbReference type="InterPro" id="IPR011767">
    <property type="entry name" value="GLR_AS"/>
</dbReference>
<dbReference type="InterPro" id="IPR002109">
    <property type="entry name" value="Glutaredoxin"/>
</dbReference>
<dbReference type="InterPro" id="IPR014025">
    <property type="entry name" value="Glutaredoxin_subgr"/>
</dbReference>
<dbReference type="InterPro" id="IPR011900">
    <property type="entry name" value="GRX_bact"/>
</dbReference>
<dbReference type="InterPro" id="IPR036249">
    <property type="entry name" value="Thioredoxin-like_sf"/>
</dbReference>
<dbReference type="NCBIfam" id="TIGR02181">
    <property type="entry name" value="GRX_bact"/>
    <property type="match status" value="1"/>
</dbReference>
<dbReference type="PANTHER" id="PTHR45694">
    <property type="entry name" value="GLUTAREDOXIN 2"/>
    <property type="match status" value="1"/>
</dbReference>
<dbReference type="PANTHER" id="PTHR45694:SF18">
    <property type="entry name" value="GLUTAREDOXIN-1-RELATED"/>
    <property type="match status" value="1"/>
</dbReference>
<dbReference type="Pfam" id="PF00462">
    <property type="entry name" value="Glutaredoxin"/>
    <property type="match status" value="1"/>
</dbReference>
<dbReference type="PRINTS" id="PR00160">
    <property type="entry name" value="GLUTAREDOXIN"/>
</dbReference>
<dbReference type="SUPFAM" id="SSF52833">
    <property type="entry name" value="Thioredoxin-like"/>
    <property type="match status" value="1"/>
</dbReference>
<dbReference type="PROSITE" id="PS00195">
    <property type="entry name" value="GLUTAREDOXIN_1"/>
    <property type="match status" value="1"/>
</dbReference>
<dbReference type="PROSITE" id="PS51354">
    <property type="entry name" value="GLUTAREDOXIN_2"/>
    <property type="match status" value="1"/>
</dbReference>
<sequence>MNKAILHTIIVYTLASCPYCIKAKALLDEKNVAYEEIEVSNFTQEEKEKFIKKSGGKKTVPQIFIDNMHVGGCDALFDLEKEGRLDKLLENQPKTTSPAAGA</sequence>
<proteinExistence type="inferred from homology"/>
<reference key="1">
    <citation type="journal article" date="2001" name="Science">
        <title>Mechanisms of evolution in Rickettsia conorii and R. prowazekii.</title>
        <authorList>
            <person name="Ogata H."/>
            <person name="Audic S."/>
            <person name="Renesto-Audiffren P."/>
            <person name="Fournier P.-E."/>
            <person name="Barbe V."/>
            <person name="Samson D."/>
            <person name="Roux V."/>
            <person name="Cossart P."/>
            <person name="Weissenbach J."/>
            <person name="Claverie J.-M."/>
            <person name="Raoult D."/>
        </authorList>
    </citation>
    <scope>NUCLEOTIDE SEQUENCE [LARGE SCALE GENOMIC DNA]</scope>
    <source>
        <strain>ATCC VR-613 / Malish 7</strain>
    </source>
</reference>
<gene>
    <name type="primary">grxC1</name>
    <name type="synonym">grx</name>
    <name type="ordered locus">RC0267</name>
</gene>
<evidence type="ECO:0000250" key="1"/>
<evidence type="ECO:0000255" key="2">
    <source>
        <dbReference type="PROSITE-ProRule" id="PRU00686"/>
    </source>
</evidence>
<evidence type="ECO:0000305" key="3"/>